<protein>
    <recommendedName>
        <fullName>POU domain, class 5, transcription factor 1.1</fullName>
    </recommendedName>
    <alternativeName>
        <fullName evidence="15">POU class V protein oct-25</fullName>
        <shortName evidence="14">XOct-25</shortName>
    </alternativeName>
</protein>
<feature type="chain" id="PRO_0000390495" description="POU domain, class 5, transcription factor 1.1">
    <location>
        <begin position="1"/>
        <end position="449"/>
    </location>
</feature>
<feature type="domain" description="POU-specific" evidence="4">
    <location>
        <begin position="227"/>
        <end position="301"/>
    </location>
</feature>
<feature type="DNA-binding region" description="Homeobox" evidence="3">
    <location>
        <begin position="321"/>
        <end position="380"/>
    </location>
</feature>
<feature type="region of interest" description="Disordered" evidence="5">
    <location>
        <begin position="79"/>
        <end position="125"/>
    </location>
</feature>
<feature type="region of interest" description="Disordered" evidence="5">
    <location>
        <begin position="170"/>
        <end position="233"/>
    </location>
</feature>
<feature type="compositionally biased region" description="Basic and acidic residues" evidence="5">
    <location>
        <begin position="97"/>
        <end position="110"/>
    </location>
</feature>
<feature type="compositionally biased region" description="Polar residues" evidence="5">
    <location>
        <begin position="170"/>
        <end position="180"/>
    </location>
</feature>
<feature type="compositionally biased region" description="Low complexity" evidence="5">
    <location>
        <begin position="187"/>
        <end position="199"/>
    </location>
</feature>
<feature type="compositionally biased region" description="Acidic residues" evidence="5">
    <location>
        <begin position="224"/>
        <end position="233"/>
    </location>
</feature>
<feature type="sequence conflict" description="In Ref. 1; AAA49996." evidence="12" ref="1">
    <original>T</original>
    <variation>A</variation>
    <location>
        <position position="29"/>
    </location>
</feature>
<feature type="sequence conflict" description="In Ref. 1; AAA49996." evidence="12" ref="1">
    <original>S</original>
    <variation>C</variation>
    <location>
        <position position="71"/>
    </location>
</feature>
<feature type="sequence conflict" description="In Ref. 3; ABH07383." evidence="12" ref="3">
    <original>T</original>
    <variation>A</variation>
    <location>
        <position position="186"/>
    </location>
</feature>
<feature type="sequence conflict" description="In Ref. 1; AAA49996." evidence="12" ref="1">
    <original>SP</original>
    <variation>R</variation>
    <location>
        <begin position="400"/>
        <end position="401"/>
    </location>
</feature>
<feature type="sequence conflict" description="In Ref. 1; AAA49996." evidence="12" ref="1">
    <original>F</original>
    <variation>G</variation>
    <location>
        <position position="428"/>
    </location>
</feature>
<name>P5F11_XENLA</name>
<dbReference type="EMBL" id="M60074">
    <property type="protein sequence ID" value="AAA49996.1"/>
    <property type="molecule type" value="mRNA"/>
</dbReference>
<dbReference type="EMBL" id="AJ699165">
    <property type="protein sequence ID" value="CAG27841.1"/>
    <property type="molecule type" value="mRNA"/>
</dbReference>
<dbReference type="EMBL" id="DQ825761">
    <property type="protein sequence ID" value="ABH07383.1"/>
    <property type="molecule type" value="mRNA"/>
</dbReference>
<dbReference type="EMBL" id="BC055964">
    <property type="protein sequence ID" value="AAH55964.1"/>
    <property type="molecule type" value="mRNA"/>
</dbReference>
<dbReference type="PIR" id="B42022">
    <property type="entry name" value="B42022"/>
</dbReference>
<dbReference type="RefSeq" id="NP_001079832.1">
    <property type="nucleotide sequence ID" value="NM_001086363.1"/>
</dbReference>
<dbReference type="SMR" id="Q7T103"/>
<dbReference type="IntAct" id="Q7T103">
    <property type="interactions" value="2"/>
</dbReference>
<dbReference type="MINT" id="Q7T103"/>
<dbReference type="DNASU" id="379522"/>
<dbReference type="GeneID" id="379522"/>
<dbReference type="KEGG" id="xla:379522"/>
<dbReference type="AGR" id="Xenbase:XB-GENE-919851"/>
<dbReference type="CTD" id="379522"/>
<dbReference type="Xenbase" id="XB-GENE-919851">
    <property type="gene designation" value="pou5f3.2.L"/>
</dbReference>
<dbReference type="OrthoDB" id="6358449at2759"/>
<dbReference type="Proteomes" id="UP000186698">
    <property type="component" value="Chromosome 8L"/>
</dbReference>
<dbReference type="Bgee" id="379522">
    <property type="expression patterns" value="Expressed in gastrula and 8 other cell types or tissues"/>
</dbReference>
<dbReference type="GO" id="GO:0005634">
    <property type="term" value="C:nucleus"/>
    <property type="evidence" value="ECO:0000305"/>
    <property type="project" value="UniProtKB"/>
</dbReference>
<dbReference type="GO" id="GO:0005667">
    <property type="term" value="C:transcription regulator complex"/>
    <property type="evidence" value="ECO:0000353"/>
    <property type="project" value="UniProtKB"/>
</dbReference>
<dbReference type="GO" id="GO:0000981">
    <property type="term" value="F:DNA-binding transcription factor activity, RNA polymerase II-specific"/>
    <property type="evidence" value="ECO:0000318"/>
    <property type="project" value="GO_Central"/>
</dbReference>
<dbReference type="GO" id="GO:0140297">
    <property type="term" value="F:DNA-binding transcription factor binding"/>
    <property type="evidence" value="ECO:0000353"/>
    <property type="project" value="UniProtKB"/>
</dbReference>
<dbReference type="GO" id="GO:0000978">
    <property type="term" value="F:RNA polymerase II cis-regulatory region sequence-specific DNA binding"/>
    <property type="evidence" value="ECO:0000318"/>
    <property type="project" value="GO_Central"/>
</dbReference>
<dbReference type="GO" id="GO:0043565">
    <property type="term" value="F:sequence-specific DNA binding"/>
    <property type="evidence" value="ECO:0000314"/>
    <property type="project" value="UniProtKB"/>
</dbReference>
<dbReference type="GO" id="GO:0046332">
    <property type="term" value="F:SMAD binding"/>
    <property type="evidence" value="ECO:0000314"/>
    <property type="project" value="UniProtKB"/>
</dbReference>
<dbReference type="GO" id="GO:0000976">
    <property type="term" value="F:transcription cis-regulatory region binding"/>
    <property type="evidence" value="ECO:0000314"/>
    <property type="project" value="UniProtKB"/>
</dbReference>
<dbReference type="GO" id="GO:0009948">
    <property type="term" value="P:anterior/posterior axis specification"/>
    <property type="evidence" value="ECO:0000315"/>
    <property type="project" value="Xenbase"/>
</dbReference>
<dbReference type="GO" id="GO:0030154">
    <property type="term" value="P:cell differentiation"/>
    <property type="evidence" value="ECO:0007669"/>
    <property type="project" value="UniProtKB-KW"/>
</dbReference>
<dbReference type="GO" id="GO:0007369">
    <property type="term" value="P:gastrulation"/>
    <property type="evidence" value="ECO:0000315"/>
    <property type="project" value="UniProtKB"/>
</dbReference>
<dbReference type="GO" id="GO:0001702">
    <property type="term" value="P:gastrulation with mouth forming second"/>
    <property type="evidence" value="ECO:0000315"/>
    <property type="project" value="Xenbase"/>
</dbReference>
<dbReference type="GO" id="GO:0060322">
    <property type="term" value="P:head development"/>
    <property type="evidence" value="ECO:0000315"/>
    <property type="project" value="Xenbase"/>
</dbReference>
<dbReference type="GO" id="GO:0032926">
    <property type="term" value="P:negative regulation of activin receptor signaling pathway"/>
    <property type="evidence" value="ECO:0000315"/>
    <property type="project" value="UniProtKB"/>
</dbReference>
<dbReference type="GO" id="GO:0030514">
    <property type="term" value="P:negative regulation of BMP signaling pathway"/>
    <property type="evidence" value="ECO:0000315"/>
    <property type="project" value="UniProtKB"/>
</dbReference>
<dbReference type="GO" id="GO:0045892">
    <property type="term" value="P:negative regulation of DNA-templated transcription"/>
    <property type="evidence" value="ECO:0000315"/>
    <property type="project" value="UniProtKB"/>
</dbReference>
<dbReference type="GO" id="GO:0045605">
    <property type="term" value="P:negative regulation of epidermal cell differentiation"/>
    <property type="evidence" value="ECO:0000315"/>
    <property type="project" value="UniProtKB"/>
</dbReference>
<dbReference type="GO" id="GO:0001841">
    <property type="term" value="P:neural tube formation"/>
    <property type="evidence" value="ECO:0000315"/>
    <property type="project" value="Xenbase"/>
</dbReference>
<dbReference type="GO" id="GO:0045893">
    <property type="term" value="P:positive regulation of DNA-templated transcription"/>
    <property type="evidence" value="ECO:0000314"/>
    <property type="project" value="UniProtKB"/>
</dbReference>
<dbReference type="GO" id="GO:0036342">
    <property type="term" value="P:post-anal tail morphogenesis"/>
    <property type="evidence" value="ECO:0000315"/>
    <property type="project" value="Xenbase"/>
</dbReference>
<dbReference type="GO" id="GO:0050767">
    <property type="term" value="P:regulation of neurogenesis"/>
    <property type="evidence" value="ECO:0000315"/>
    <property type="project" value="UniProtKB"/>
</dbReference>
<dbReference type="GO" id="GO:0006357">
    <property type="term" value="P:regulation of transcription by RNA polymerase II"/>
    <property type="evidence" value="ECO:0000318"/>
    <property type="project" value="GO_Central"/>
</dbReference>
<dbReference type="CDD" id="cd00086">
    <property type="entry name" value="homeodomain"/>
    <property type="match status" value="1"/>
</dbReference>
<dbReference type="FunFam" id="1.10.260.40:FF:000022">
    <property type="entry name" value="POU domain protein"/>
    <property type="match status" value="1"/>
</dbReference>
<dbReference type="Gene3D" id="1.10.10.60">
    <property type="entry name" value="Homeodomain-like"/>
    <property type="match status" value="1"/>
</dbReference>
<dbReference type="Gene3D" id="1.10.260.40">
    <property type="entry name" value="lambda repressor-like DNA-binding domains"/>
    <property type="match status" value="1"/>
</dbReference>
<dbReference type="InterPro" id="IPR001356">
    <property type="entry name" value="HD"/>
</dbReference>
<dbReference type="InterPro" id="IPR017970">
    <property type="entry name" value="Homeobox_CS"/>
</dbReference>
<dbReference type="InterPro" id="IPR009057">
    <property type="entry name" value="Homeodomain-like_sf"/>
</dbReference>
<dbReference type="InterPro" id="IPR010982">
    <property type="entry name" value="Lambda_DNA-bd_dom_sf"/>
</dbReference>
<dbReference type="InterPro" id="IPR013847">
    <property type="entry name" value="POU"/>
</dbReference>
<dbReference type="InterPro" id="IPR000327">
    <property type="entry name" value="POU_dom"/>
</dbReference>
<dbReference type="InterPro" id="IPR050255">
    <property type="entry name" value="POU_domain_TF"/>
</dbReference>
<dbReference type="PANTHER" id="PTHR11636">
    <property type="entry name" value="POU DOMAIN"/>
    <property type="match status" value="1"/>
</dbReference>
<dbReference type="PANTHER" id="PTHR11636:SF136">
    <property type="entry name" value="POU DOMAIN, CLASS 5, TRANSCRIPTION FACTOR 1.1"/>
    <property type="match status" value="1"/>
</dbReference>
<dbReference type="Pfam" id="PF00046">
    <property type="entry name" value="Homeodomain"/>
    <property type="match status" value="1"/>
</dbReference>
<dbReference type="Pfam" id="PF00157">
    <property type="entry name" value="Pou"/>
    <property type="match status" value="1"/>
</dbReference>
<dbReference type="PRINTS" id="PR00028">
    <property type="entry name" value="POUDOMAIN"/>
</dbReference>
<dbReference type="SMART" id="SM00389">
    <property type="entry name" value="HOX"/>
    <property type="match status" value="1"/>
</dbReference>
<dbReference type="SMART" id="SM00352">
    <property type="entry name" value="POU"/>
    <property type="match status" value="1"/>
</dbReference>
<dbReference type="SUPFAM" id="SSF46689">
    <property type="entry name" value="Homeodomain-like"/>
    <property type="match status" value="1"/>
</dbReference>
<dbReference type="SUPFAM" id="SSF47413">
    <property type="entry name" value="lambda repressor-like DNA-binding domains"/>
    <property type="match status" value="1"/>
</dbReference>
<dbReference type="PROSITE" id="PS00027">
    <property type="entry name" value="HOMEOBOX_1"/>
    <property type="match status" value="1"/>
</dbReference>
<dbReference type="PROSITE" id="PS50071">
    <property type="entry name" value="HOMEOBOX_2"/>
    <property type="match status" value="1"/>
</dbReference>
<dbReference type="PROSITE" id="PS00465">
    <property type="entry name" value="POU_2"/>
    <property type="match status" value="1"/>
</dbReference>
<dbReference type="PROSITE" id="PS51179">
    <property type="entry name" value="POU_3"/>
    <property type="match status" value="1"/>
</dbReference>
<keyword id="KW-0010">Activator</keyword>
<keyword id="KW-0217">Developmental protein</keyword>
<keyword id="KW-0221">Differentiation</keyword>
<keyword id="KW-0238">DNA-binding</keyword>
<keyword id="KW-0371">Homeobox</keyword>
<keyword id="KW-0539">Nucleus</keyword>
<keyword id="KW-1185">Reference proteome</keyword>
<keyword id="KW-0804">Transcription</keyword>
<keyword id="KW-0805">Transcription regulation</keyword>
<comment type="function">
    <text evidence="6 7 8 9 10 11">Transcription factor that binds to the octamer motif (5'-ATTTGCAT-3'). Activates transcription when directly bound to the octamer DNA sequence, but can form repression complexes with other proteins at the promoter site to inhibit transcription. Binds to the promoter of the vent2-B gene to activate transcription when in the presence of other BMP signaling factors also bound to the promoter. Inhibits the competence of ectodermal cells to respond to BMP during embryogenesis thereby inhibiting epidermal differentiation and promoting neural induction. Antagonizes the activity of nodal/activin signaling by forming a transcriptional repression complex on the gsc and mix2 gene promoters to inhibit their transcription, and thus maintain the undifferentiated state of embryonic cells to prevent them from differentiating prematurely. Acts maternally to inhibit vegt and beta-catenin-activated gene transcription by forming a transcriptional repression complex on the nodal/nr1 and siamois promoters to inhibit their transcription.</text>
</comment>
<comment type="subunit">
    <text evidence="6 9 11">Interacts with components of the transcription complex that assembles on the vent2-B gene, including vent2 (via C-terminus), smad1 and smad4. Forms a repression complex on the promoters of the gsc and mix2 genes via interactions with the nodal/activin signaling pathway transducers foxh1/fast1, gtf2ird1/wbscr11 and smad2. Forms a repression complex on the promoters of the nodal/nr1 and siamois genes with the maternal factors tcf7l1/tcf3 and vegt.</text>
</comment>
<comment type="interaction">
    <interactant intactId="EBI-7438970">
        <id>Q7T103</id>
    </interactant>
    <interactant intactId="EBI-7439087">
        <id>Q90ZB6</id>
        <label>tcf7l1-b</label>
    </interactant>
    <organismsDiffer>false</organismsDiffer>
    <experiments>3</experiments>
</comment>
<comment type="interaction">
    <interactant intactId="EBI-7438970">
        <id>Q7T103</id>
    </interactant>
    <interactant intactId="EBI-7439000">
        <id>P87377</id>
        <label>vegt-a</label>
    </interactant>
    <organismsDiffer>false</organismsDiffer>
    <experiments>3</experiments>
</comment>
<comment type="subcellular location">
    <subcellularLocation>
        <location evidence="1 3 4">Nucleus</location>
    </subcellularLocation>
</comment>
<comment type="tissue specificity">
    <text evidence="6 8 9">Highly enriched within the animal half of developing embryos within ectodermal and mesodermal regions. Expressed in the neuroectoderm at the early neurula stage, with expression initially extending to the future hindbrain/midbrain boundary, but later shifting toward the posterior pole where it persists within the tip of the tail in hatching embryos. Expressed at very low levels in the adult kidney.</text>
</comment>
<comment type="developmental stage">
    <text evidence="6 8">Expressed both maternally and zygotically. Expressed in oocytes and cleavage stage embryos. Expression increases during blastula stages, reaches a maximum at stage 11 during gastrulation, then subsequently declines to be no longer detectable by the end of neurulation.</text>
</comment>
<comment type="similarity">
    <text evidence="2">Belongs to the POU transcription factor family. Class-5 subfamily.</text>
</comment>
<gene>
    <name type="primary">pou5f1.1</name>
    <name evidence="16" type="synonym">oct-25</name>
</gene>
<evidence type="ECO:0000250" key="1">
    <source>
        <dbReference type="UniProtKB" id="Q01860"/>
    </source>
</evidence>
<evidence type="ECO:0000255" key="2"/>
<evidence type="ECO:0000255" key="3">
    <source>
        <dbReference type="PROSITE-ProRule" id="PRU00108"/>
    </source>
</evidence>
<evidence type="ECO:0000255" key="4">
    <source>
        <dbReference type="PROSITE-ProRule" id="PRU00530"/>
    </source>
</evidence>
<evidence type="ECO:0000256" key="5">
    <source>
        <dbReference type="SAM" id="MobiDB-lite"/>
    </source>
</evidence>
<evidence type="ECO:0000269" key="6">
    <source>
    </source>
</evidence>
<evidence type="ECO:0000269" key="7">
    <source>
    </source>
</evidence>
<evidence type="ECO:0000269" key="8">
    <source>
    </source>
</evidence>
<evidence type="ECO:0000269" key="9">
    <source>
    </source>
</evidence>
<evidence type="ECO:0000269" key="10">
    <source>
    </source>
</evidence>
<evidence type="ECO:0000269" key="11">
    <source>
    </source>
</evidence>
<evidence type="ECO:0000305" key="12"/>
<evidence type="ECO:0000312" key="13">
    <source>
        <dbReference type="EMBL" id="AAA49996.1"/>
    </source>
</evidence>
<evidence type="ECO:0000312" key="14">
    <source>
        <dbReference type="EMBL" id="AAH55964.1"/>
    </source>
</evidence>
<evidence type="ECO:0000312" key="15">
    <source>
        <dbReference type="EMBL" id="ABH07383.1"/>
    </source>
</evidence>
<evidence type="ECO:0000312" key="16">
    <source>
        <dbReference type="EMBL" id="CAG27841.1"/>
    </source>
</evidence>
<accession>Q7T103</accession>
<accession>A9CDQ2</accession>
<accession>Q99293</accession>
<reference evidence="12 13" key="1">
    <citation type="journal article" date="1992" name="Mol. Cell. Biol.">
        <title>Sequential expression of multiple POU proteins during amphibian early development.</title>
        <authorList>
            <person name="Hinkley C.S."/>
            <person name="Martin J.F."/>
            <person name="Leibham D."/>
            <person name="Perry M."/>
        </authorList>
    </citation>
    <scope>NUCLEOTIDE SEQUENCE [MRNA]</scope>
    <scope>FUNCTION</scope>
    <scope>TISSUE SPECIFICITY</scope>
    <scope>DEVELOPMENTAL STAGE</scope>
    <source>
        <tissue evidence="8">Gastrula</tissue>
    </source>
</reference>
<reference evidence="12 16" key="2">
    <citation type="journal article" date="2004" name="J. Biol. Chem.">
        <title>The POU factor Oct-25 regulates the Xvent-2B gene and counteracts terminal differentiation in Xenopus embryos.</title>
        <authorList>
            <person name="Cao Y."/>
            <person name="Knochel S."/>
            <person name="Donow C."/>
            <person name="Miethe J."/>
            <person name="Kaufmann E."/>
            <person name="Knochel W."/>
        </authorList>
    </citation>
    <scope>NUCLEOTIDE SEQUENCE [MRNA]</scope>
    <scope>FUNCTION</scope>
    <scope>INTERACTION WITH VENT2; SMAD1 AND SMAD4</scope>
    <scope>TISSUE SPECIFICITY</scope>
    <scope>DEVELOPMENTAL STAGE</scope>
    <source>
        <tissue evidence="6">Gastrula</tissue>
    </source>
</reference>
<reference evidence="12 15" key="3">
    <citation type="journal article" date="2007" name="Mech. Dev.">
        <title>The Xenopus POU class V transcription factor XOct-25 inhibits ectodermal competence to respond to bone morphogenetic protein-mediated embryonic induction.</title>
        <authorList>
            <person name="Takebayashi-Suzuki K."/>
            <person name="Arita N."/>
            <person name="Murasaki E."/>
            <person name="Suzuki A."/>
        </authorList>
    </citation>
    <scope>NUCLEOTIDE SEQUENCE [MRNA]</scope>
    <scope>FUNCTION</scope>
    <source>
        <tissue evidence="10">Gastrula</tissue>
    </source>
</reference>
<reference evidence="14" key="4">
    <citation type="submission" date="2003-08" db="EMBL/GenBank/DDBJ databases">
        <authorList>
            <consortium name="NIH - Xenopus Gene Collection (XGC) project"/>
        </authorList>
    </citation>
    <scope>NUCLEOTIDE SEQUENCE [LARGE SCALE MRNA]</scope>
    <source>
        <tissue evidence="14">Gastrula</tissue>
    </source>
</reference>
<reference evidence="12" key="5">
    <citation type="journal article" date="2006" name="Mech. Dev.">
        <title>Xenopus POU factors of subclass V inhibit activin/nodal signaling during gastrulation.</title>
        <authorList>
            <person name="Cao Y."/>
            <person name="Siegel D."/>
            <person name="Knochel W."/>
        </authorList>
    </citation>
    <scope>FUNCTION</scope>
</reference>
<reference evidence="12" key="6">
    <citation type="journal article" date="2007" name="EMBO J.">
        <title>POU-V factors antagonize maternal VegT activity and beta-Catenin signaling in Xenopus embryos.</title>
        <authorList>
            <person name="Cao Y."/>
            <person name="Siegel D."/>
            <person name="Donow C."/>
            <person name="Knochel S."/>
            <person name="Yuan L."/>
            <person name="Knochel W."/>
        </authorList>
    </citation>
    <scope>FUNCTION</scope>
    <scope>INTERACTION WITH TCF7L1 AND VEGT</scope>
    <scope>TISSUE SPECIFICITY</scope>
</reference>
<reference evidence="12" key="7">
    <citation type="journal article" date="2008" name="J. Biol. Chem.">
        <title>Oct25 represses transcription of nodal/activin target genes by interaction with signal transducers during Xenopus gastrulation.</title>
        <authorList>
            <person name="Cao Y."/>
            <person name="Siegel D."/>
            <person name="Oswald F."/>
            <person name="Knochel W."/>
        </authorList>
    </citation>
    <scope>FUNCTION</scope>
    <scope>INTERACTION WITH FOXH1; GTF2IRD1 AND SMAD2</scope>
</reference>
<sequence length="449" mass="49676">MYSQQPFPAFAFNAGLMQDPANCHFGGYTGLGHPQPFSFAFSTLKSENGESGVQGMGDCTTPVMPWNSLASFDHQVQMENNQQGNPPRAPSPTLSDSRIKVKEEVVHETDSGEESPEPKYPSPPNPSLYYPNAWTGAPFWQVNPTPGNNINPMPNQTLVKNTSLPGNTTYPTPANQSPNTPVDCVTSSMESSRCSSTNSPNGAINERATTIPNGEMLDGGQSSDNEEEVPSESEMEQFAKDLKHKRVSLGYTQADVGYALGVLYGKMFSQTTICRFESLQLSFKNMCQLKPFLERWVVEAENNDNLQELINREQVIAQTRKRKRRTNIENIVKGTLESYFMKCPKPGAQEMVQIAKELNMDKDVVRVWFCNRRQKGKRQGMPTVEENDGEGYDVAQTMGSPPVGHYALQQVVTPQGYMAAPQIYASAFHKNDLFPQTVPHGMAMGGHIG</sequence>
<organism>
    <name type="scientific">Xenopus laevis</name>
    <name type="common">African clawed frog</name>
    <dbReference type="NCBI Taxonomy" id="8355"/>
    <lineage>
        <taxon>Eukaryota</taxon>
        <taxon>Metazoa</taxon>
        <taxon>Chordata</taxon>
        <taxon>Craniata</taxon>
        <taxon>Vertebrata</taxon>
        <taxon>Euteleostomi</taxon>
        <taxon>Amphibia</taxon>
        <taxon>Batrachia</taxon>
        <taxon>Anura</taxon>
        <taxon>Pipoidea</taxon>
        <taxon>Pipidae</taxon>
        <taxon>Xenopodinae</taxon>
        <taxon>Xenopus</taxon>
        <taxon>Xenopus</taxon>
    </lineage>
</organism>
<proteinExistence type="evidence at protein level"/>